<evidence type="ECO:0000255" key="1">
    <source>
        <dbReference type="HAMAP-Rule" id="MF_00114"/>
    </source>
</evidence>
<reference key="1">
    <citation type="journal article" date="2008" name="Proc. Natl. Acad. Sci. U.S.A.">
        <title>The genome of Cyanothece 51142, a unicellular diazotrophic cyanobacterium important in the marine nitrogen cycle.</title>
        <authorList>
            <person name="Welsh E.A."/>
            <person name="Liberton M."/>
            <person name="Stoeckel J."/>
            <person name="Loh T."/>
            <person name="Elvitigala T."/>
            <person name="Wang C."/>
            <person name="Wollam A."/>
            <person name="Fulton R.S."/>
            <person name="Clifton S.W."/>
            <person name="Jacobs J.M."/>
            <person name="Aurora R."/>
            <person name="Ghosh B.K."/>
            <person name="Sherman L.A."/>
            <person name="Smith R.D."/>
            <person name="Wilson R.K."/>
            <person name="Pakrasi H.B."/>
        </authorList>
    </citation>
    <scope>NUCLEOTIDE SEQUENCE [LARGE SCALE GENOMIC DNA]</scope>
    <source>
        <strain>ATCC 51142 / BH68</strain>
    </source>
</reference>
<feature type="chain" id="PRO_1000094843" description="Deoxyribose-phosphate aldolase">
    <location>
        <begin position="1"/>
        <end position="221"/>
    </location>
</feature>
<feature type="active site" description="Proton donor/acceptor" evidence="1">
    <location>
        <position position="96"/>
    </location>
</feature>
<feature type="active site" description="Schiff-base intermediate with acetaldehyde" evidence="1">
    <location>
        <position position="157"/>
    </location>
</feature>
<feature type="active site" description="Proton donor/acceptor" evidence="1">
    <location>
        <position position="185"/>
    </location>
</feature>
<proteinExistence type="inferred from homology"/>
<name>DEOC_CROS5</name>
<comment type="function">
    <text evidence="1">Catalyzes a reversible aldol reaction between acetaldehyde and D-glyceraldehyde 3-phosphate to generate 2-deoxy-D-ribose 5-phosphate.</text>
</comment>
<comment type="catalytic activity">
    <reaction evidence="1">
        <text>2-deoxy-D-ribose 5-phosphate = D-glyceraldehyde 3-phosphate + acetaldehyde</text>
        <dbReference type="Rhea" id="RHEA:12821"/>
        <dbReference type="ChEBI" id="CHEBI:15343"/>
        <dbReference type="ChEBI" id="CHEBI:59776"/>
        <dbReference type="ChEBI" id="CHEBI:62877"/>
        <dbReference type="EC" id="4.1.2.4"/>
    </reaction>
</comment>
<comment type="pathway">
    <text evidence="1">Carbohydrate degradation; 2-deoxy-D-ribose 1-phosphate degradation; D-glyceraldehyde 3-phosphate and acetaldehyde from 2-deoxy-alpha-D-ribose 1-phosphate: step 2/2.</text>
</comment>
<comment type="subcellular location">
    <subcellularLocation>
        <location evidence="1">Cytoplasm</location>
    </subcellularLocation>
</comment>
<comment type="similarity">
    <text evidence="1">Belongs to the DeoC/FbaB aldolase family. DeoC type 1 subfamily.</text>
</comment>
<sequence>MIEKNINIDIATYIDHSFLKPTATPEDIEQCCNEAQYFGFPTVCVYPSAVSQAVKLLHGQKIAVCTVIGFPTGANTSSVKLYEAQEATENGATELDIMINLGQVKAGSSEEIYNEISAICEATGQTIKVILETNLLTDTEKRLAAEICMDAGANYLKTCSGWFGGATVTDVRFLNNISQGRVGIKASGGIKTLEQAYELIEAGATRLGTSHGVALVQSQNG</sequence>
<gene>
    <name evidence="1" type="primary">deoC</name>
    <name type="ordered locus">cce_3026</name>
</gene>
<dbReference type="EC" id="4.1.2.4" evidence="1"/>
<dbReference type="EMBL" id="CP000806">
    <property type="protein sequence ID" value="ACB52374.1"/>
    <property type="molecule type" value="Genomic_DNA"/>
</dbReference>
<dbReference type="RefSeq" id="WP_009547668.1">
    <property type="nucleotide sequence ID" value="NC_010546.1"/>
</dbReference>
<dbReference type="SMR" id="B1WW41"/>
<dbReference type="STRING" id="43989.cce_3026"/>
<dbReference type="KEGG" id="cyt:cce_3026"/>
<dbReference type="eggNOG" id="COG0274">
    <property type="taxonomic scope" value="Bacteria"/>
</dbReference>
<dbReference type="HOGENOM" id="CLU_053595_0_2_3"/>
<dbReference type="OrthoDB" id="9778711at2"/>
<dbReference type="UniPathway" id="UPA00002">
    <property type="reaction ID" value="UER00468"/>
</dbReference>
<dbReference type="Proteomes" id="UP000001203">
    <property type="component" value="Chromosome circular"/>
</dbReference>
<dbReference type="GO" id="GO:0005737">
    <property type="term" value="C:cytoplasm"/>
    <property type="evidence" value="ECO:0007669"/>
    <property type="project" value="UniProtKB-SubCell"/>
</dbReference>
<dbReference type="GO" id="GO:0004139">
    <property type="term" value="F:deoxyribose-phosphate aldolase activity"/>
    <property type="evidence" value="ECO:0007669"/>
    <property type="project" value="UniProtKB-UniRule"/>
</dbReference>
<dbReference type="GO" id="GO:0006018">
    <property type="term" value="P:2-deoxyribose 1-phosphate catabolic process"/>
    <property type="evidence" value="ECO:0007669"/>
    <property type="project" value="UniProtKB-UniRule"/>
</dbReference>
<dbReference type="GO" id="GO:0016052">
    <property type="term" value="P:carbohydrate catabolic process"/>
    <property type="evidence" value="ECO:0007669"/>
    <property type="project" value="TreeGrafter"/>
</dbReference>
<dbReference type="GO" id="GO:0009264">
    <property type="term" value="P:deoxyribonucleotide catabolic process"/>
    <property type="evidence" value="ECO:0007669"/>
    <property type="project" value="InterPro"/>
</dbReference>
<dbReference type="CDD" id="cd00959">
    <property type="entry name" value="DeoC"/>
    <property type="match status" value="1"/>
</dbReference>
<dbReference type="FunFam" id="3.20.20.70:FF:000044">
    <property type="entry name" value="Deoxyribose-phosphate aldolase"/>
    <property type="match status" value="1"/>
</dbReference>
<dbReference type="Gene3D" id="3.20.20.70">
    <property type="entry name" value="Aldolase class I"/>
    <property type="match status" value="1"/>
</dbReference>
<dbReference type="HAMAP" id="MF_00114">
    <property type="entry name" value="DeoC_type1"/>
    <property type="match status" value="1"/>
</dbReference>
<dbReference type="InterPro" id="IPR013785">
    <property type="entry name" value="Aldolase_TIM"/>
</dbReference>
<dbReference type="InterPro" id="IPR011343">
    <property type="entry name" value="DeoC"/>
</dbReference>
<dbReference type="InterPro" id="IPR002915">
    <property type="entry name" value="DeoC/FbaB/LacD_aldolase"/>
</dbReference>
<dbReference type="InterPro" id="IPR028581">
    <property type="entry name" value="DeoC_typeI"/>
</dbReference>
<dbReference type="NCBIfam" id="TIGR00126">
    <property type="entry name" value="deoC"/>
    <property type="match status" value="1"/>
</dbReference>
<dbReference type="PANTHER" id="PTHR10889">
    <property type="entry name" value="DEOXYRIBOSE-PHOSPHATE ALDOLASE"/>
    <property type="match status" value="1"/>
</dbReference>
<dbReference type="PANTHER" id="PTHR10889:SF1">
    <property type="entry name" value="DEOXYRIBOSE-PHOSPHATE ALDOLASE"/>
    <property type="match status" value="1"/>
</dbReference>
<dbReference type="Pfam" id="PF01791">
    <property type="entry name" value="DeoC"/>
    <property type="match status" value="1"/>
</dbReference>
<dbReference type="PIRSF" id="PIRSF001357">
    <property type="entry name" value="DeoC"/>
    <property type="match status" value="1"/>
</dbReference>
<dbReference type="SMART" id="SM01133">
    <property type="entry name" value="DeoC"/>
    <property type="match status" value="1"/>
</dbReference>
<dbReference type="SUPFAM" id="SSF51569">
    <property type="entry name" value="Aldolase"/>
    <property type="match status" value="1"/>
</dbReference>
<keyword id="KW-0963">Cytoplasm</keyword>
<keyword id="KW-0456">Lyase</keyword>
<keyword id="KW-1185">Reference proteome</keyword>
<keyword id="KW-0704">Schiff base</keyword>
<protein>
    <recommendedName>
        <fullName evidence="1">Deoxyribose-phosphate aldolase</fullName>
        <shortName evidence="1">DERA</shortName>
        <ecNumber evidence="1">4.1.2.4</ecNumber>
    </recommendedName>
    <alternativeName>
        <fullName evidence="1">2-deoxy-D-ribose 5-phosphate aldolase</fullName>
    </alternativeName>
    <alternativeName>
        <fullName evidence="1">Phosphodeoxyriboaldolase</fullName>
        <shortName evidence="1">Deoxyriboaldolase</shortName>
    </alternativeName>
</protein>
<accession>B1WW41</accession>
<organism>
    <name type="scientific">Crocosphaera subtropica (strain ATCC 51142 / BH68)</name>
    <name type="common">Cyanothece sp. (strain ATCC 51142)</name>
    <dbReference type="NCBI Taxonomy" id="43989"/>
    <lineage>
        <taxon>Bacteria</taxon>
        <taxon>Bacillati</taxon>
        <taxon>Cyanobacteriota</taxon>
        <taxon>Cyanophyceae</taxon>
        <taxon>Oscillatoriophycideae</taxon>
        <taxon>Chroococcales</taxon>
        <taxon>Aphanothecaceae</taxon>
        <taxon>Crocosphaera</taxon>
        <taxon>Crocosphaera subtropica</taxon>
    </lineage>
</organism>